<keyword id="KW-0002">3D-structure</keyword>
<keyword id="KW-0665">Pyrimidine biosynthesis</keyword>
<keyword id="KW-0808">Transferase</keyword>
<organism>
    <name type="scientific">Pyrococcus abyssi (strain GE5 / Orsay)</name>
    <dbReference type="NCBI Taxonomy" id="272844"/>
    <lineage>
        <taxon>Archaea</taxon>
        <taxon>Methanobacteriati</taxon>
        <taxon>Methanobacteriota</taxon>
        <taxon>Thermococci</taxon>
        <taxon>Thermococcales</taxon>
        <taxon>Thermococcaceae</taxon>
        <taxon>Pyrococcus</taxon>
    </lineage>
</organism>
<reference key="1">
    <citation type="journal article" date="1997" name="J. Bacteriol.">
        <title>Aspartate transcarbamylase from the deep-sea hyperthermophilic archaeon Pyrococcus abyssi: genetic organization, structure, and expression in Escherichia coli.</title>
        <authorList>
            <person name="Purcarea C."/>
            <person name="Herve G."/>
            <person name="Ladjimi M.M."/>
            <person name="Cunin R."/>
        </authorList>
    </citation>
    <scope>NUCLEOTIDE SEQUENCE [GENOMIC DNA]</scope>
    <scope>SUBUNIT</scope>
    <source>
        <strain>GE5 / Orsay</strain>
    </source>
</reference>
<reference key="2">
    <citation type="journal article" date="2003" name="Mol. Microbiol.">
        <title>An integrated analysis of the genome of the hyperthermophilic archaeon Pyrococcus abyssi.</title>
        <authorList>
            <person name="Cohen G.N."/>
            <person name="Barbe V."/>
            <person name="Flament D."/>
            <person name="Galperin M."/>
            <person name="Heilig R."/>
            <person name="Lecompte O."/>
            <person name="Poch O."/>
            <person name="Prieur D."/>
            <person name="Querellou J."/>
            <person name="Ripp R."/>
            <person name="Thierry J.-C."/>
            <person name="Van der Oost J."/>
            <person name="Weissenbach J."/>
            <person name="Zivanovic Y."/>
            <person name="Forterre P."/>
        </authorList>
    </citation>
    <scope>NUCLEOTIDE SEQUENCE [LARGE SCALE GENOMIC DNA]</scope>
    <source>
        <strain>GE5 / Orsay</strain>
    </source>
</reference>
<reference key="3">
    <citation type="journal article" date="2012" name="Curr. Microbiol.">
        <title>Re-annotation of two hyperthermophilic archaea Pyrococcus abyssi GE5 and Pyrococcus furiosus DSM 3638.</title>
        <authorList>
            <person name="Gao J."/>
            <person name="Wang J."/>
        </authorList>
    </citation>
    <scope>GENOME REANNOTATION</scope>
    <source>
        <strain>GE5 / Orsay</strain>
    </source>
</reference>
<proteinExistence type="evidence at protein level"/>
<protein>
    <recommendedName>
        <fullName evidence="1">Aspartate carbamoyltransferase catalytic subunit</fullName>
        <ecNumber evidence="1">2.1.3.2</ecNumber>
    </recommendedName>
    <alternativeName>
        <fullName evidence="1">Aspartate transcarbamylase</fullName>
        <shortName evidence="1">ATCase</shortName>
    </alternativeName>
</protein>
<name>PYRB_PYRAB</name>
<dbReference type="EC" id="2.1.3.2" evidence="1"/>
<dbReference type="EMBL" id="U61765">
    <property type="protein sequence ID" value="AAB62984.1"/>
    <property type="molecule type" value="Genomic_DNA"/>
</dbReference>
<dbReference type="EMBL" id="AJ248287">
    <property type="protein sequence ID" value="CAB50232.1"/>
    <property type="molecule type" value="Genomic_DNA"/>
</dbReference>
<dbReference type="EMBL" id="HE613800">
    <property type="protein sequence ID" value="CCE70769.1"/>
    <property type="molecule type" value="Genomic_DNA"/>
</dbReference>
<dbReference type="PIR" id="C75042">
    <property type="entry name" value="C75042"/>
</dbReference>
<dbReference type="RefSeq" id="WP_010868442.1">
    <property type="nucleotide sequence ID" value="NC_000868.1"/>
</dbReference>
<dbReference type="PDB" id="1ML4">
    <property type="method" value="X-ray"/>
    <property type="resolution" value="1.80 A"/>
    <property type="chains" value="A=1-308"/>
</dbReference>
<dbReference type="PDBsum" id="1ML4"/>
<dbReference type="SMR" id="P77918"/>
<dbReference type="STRING" id="272844.PAB1498"/>
<dbReference type="KEGG" id="pab:PAB1498"/>
<dbReference type="PATRIC" id="fig|272844.11.peg.1412"/>
<dbReference type="eggNOG" id="arCOG00911">
    <property type="taxonomic scope" value="Archaea"/>
</dbReference>
<dbReference type="HOGENOM" id="CLU_043846_1_2_2"/>
<dbReference type="OrthoDB" id="7792at2157"/>
<dbReference type="PhylomeDB" id="P77918"/>
<dbReference type="BRENDA" id="2.1.3.2">
    <property type="organism ID" value="5242"/>
</dbReference>
<dbReference type="UniPathway" id="UPA00070">
    <property type="reaction ID" value="UER00116"/>
</dbReference>
<dbReference type="EvolutionaryTrace" id="P77918"/>
<dbReference type="Proteomes" id="UP000000810">
    <property type="component" value="Chromosome"/>
</dbReference>
<dbReference type="Proteomes" id="UP000009139">
    <property type="component" value="Chromosome"/>
</dbReference>
<dbReference type="GO" id="GO:0016597">
    <property type="term" value="F:amino acid binding"/>
    <property type="evidence" value="ECO:0007669"/>
    <property type="project" value="InterPro"/>
</dbReference>
<dbReference type="GO" id="GO:0004070">
    <property type="term" value="F:aspartate carbamoyltransferase activity"/>
    <property type="evidence" value="ECO:0007669"/>
    <property type="project" value="UniProtKB-UniRule"/>
</dbReference>
<dbReference type="GO" id="GO:0006207">
    <property type="term" value="P:'de novo' pyrimidine nucleobase biosynthetic process"/>
    <property type="evidence" value="ECO:0007669"/>
    <property type="project" value="InterPro"/>
</dbReference>
<dbReference type="GO" id="GO:0044205">
    <property type="term" value="P:'de novo' UMP biosynthetic process"/>
    <property type="evidence" value="ECO:0007669"/>
    <property type="project" value="UniProtKB-UniRule"/>
</dbReference>
<dbReference type="GO" id="GO:0006520">
    <property type="term" value="P:amino acid metabolic process"/>
    <property type="evidence" value="ECO:0007669"/>
    <property type="project" value="InterPro"/>
</dbReference>
<dbReference type="FunFam" id="3.40.50.1370:FF:000001">
    <property type="entry name" value="Aspartate carbamoyltransferase"/>
    <property type="match status" value="1"/>
</dbReference>
<dbReference type="FunFam" id="3.40.50.1370:FF:000021">
    <property type="entry name" value="Aspartate carbamoyltransferase"/>
    <property type="match status" value="1"/>
</dbReference>
<dbReference type="Gene3D" id="3.40.50.1370">
    <property type="entry name" value="Aspartate/ornithine carbamoyltransferase"/>
    <property type="match status" value="2"/>
</dbReference>
<dbReference type="HAMAP" id="MF_00001">
    <property type="entry name" value="Asp_carb_tr"/>
    <property type="match status" value="1"/>
</dbReference>
<dbReference type="InterPro" id="IPR006132">
    <property type="entry name" value="Asp/Orn_carbamoyltranf_P-bd"/>
</dbReference>
<dbReference type="InterPro" id="IPR006130">
    <property type="entry name" value="Asp/Orn_carbamoylTrfase"/>
</dbReference>
<dbReference type="InterPro" id="IPR036901">
    <property type="entry name" value="Asp/Orn_carbamoylTrfase_sf"/>
</dbReference>
<dbReference type="InterPro" id="IPR002082">
    <property type="entry name" value="Asp_carbamoyltransf"/>
</dbReference>
<dbReference type="InterPro" id="IPR006131">
    <property type="entry name" value="Asp_carbamoyltransf_Asp/Orn-bd"/>
</dbReference>
<dbReference type="NCBIfam" id="TIGR00670">
    <property type="entry name" value="asp_carb_tr"/>
    <property type="match status" value="1"/>
</dbReference>
<dbReference type="NCBIfam" id="NF002032">
    <property type="entry name" value="PRK00856.1"/>
    <property type="match status" value="1"/>
</dbReference>
<dbReference type="PANTHER" id="PTHR45753:SF6">
    <property type="entry name" value="ASPARTATE CARBAMOYLTRANSFERASE"/>
    <property type="match status" value="1"/>
</dbReference>
<dbReference type="PANTHER" id="PTHR45753">
    <property type="entry name" value="ORNITHINE CARBAMOYLTRANSFERASE, MITOCHONDRIAL"/>
    <property type="match status" value="1"/>
</dbReference>
<dbReference type="Pfam" id="PF00185">
    <property type="entry name" value="OTCace"/>
    <property type="match status" value="1"/>
</dbReference>
<dbReference type="Pfam" id="PF02729">
    <property type="entry name" value="OTCace_N"/>
    <property type="match status" value="1"/>
</dbReference>
<dbReference type="PRINTS" id="PR00100">
    <property type="entry name" value="AOTCASE"/>
</dbReference>
<dbReference type="PRINTS" id="PR00101">
    <property type="entry name" value="ATCASE"/>
</dbReference>
<dbReference type="SUPFAM" id="SSF53671">
    <property type="entry name" value="Aspartate/ornithine carbamoyltransferase"/>
    <property type="match status" value="1"/>
</dbReference>
<dbReference type="PROSITE" id="PS00097">
    <property type="entry name" value="CARBAMOYLTRANSFERASE"/>
    <property type="match status" value="1"/>
</dbReference>
<sequence>MDWKGRDVISIRDFSKEDIETVLATAERLERELKEKGQLEYAKGKILATLFFEPSTRTRLSFESAMHRLGGAVIGFAEASTSSVKKGESLRDTIKTVEQYCDVIVIRHPKEGAARLAAEVAEVPVINAGDGSNQHPTQTLLDLYTIKKEFGRIDGLKIGLLGDLKYGRTVHSLAEALTFYDVELYLISPELLRMPRHIVEELREKGMKVVETTTLEDVIGKLDVLYVTRIQKERFPDEQEYLKVKGSYQVNLKVLEKAKDELRIMHPLPRVDEIHPEVDNTKHAIYFRQVFNGVPVRMALLALVLGVI</sequence>
<gene>
    <name evidence="1" type="primary">pyrB</name>
    <name type="ordered locus">PYRAB13270</name>
    <name type="ORF">PAB1498</name>
</gene>
<comment type="function">
    <text evidence="1">Catalyzes the condensation of carbamoyl phosphate and aspartate to form carbamoyl aspartate and inorganic phosphate, the committed step in the de novo pyrimidine nucleotide biosynthesis pathway.</text>
</comment>
<comment type="catalytic activity">
    <reaction evidence="1">
        <text>carbamoyl phosphate + L-aspartate = N-carbamoyl-L-aspartate + phosphate + H(+)</text>
        <dbReference type="Rhea" id="RHEA:20013"/>
        <dbReference type="ChEBI" id="CHEBI:15378"/>
        <dbReference type="ChEBI" id="CHEBI:29991"/>
        <dbReference type="ChEBI" id="CHEBI:32814"/>
        <dbReference type="ChEBI" id="CHEBI:43474"/>
        <dbReference type="ChEBI" id="CHEBI:58228"/>
        <dbReference type="EC" id="2.1.3.2"/>
    </reaction>
</comment>
<comment type="pathway">
    <text evidence="1">Pyrimidine metabolism; UMP biosynthesis via de novo pathway; (S)-dihydroorotate from bicarbonate: step 2/3.</text>
</comment>
<comment type="subunit">
    <text evidence="1 2">Heterooligomer of catalytic and regulatory chains.</text>
</comment>
<comment type="similarity">
    <text evidence="1 3">Belongs to the aspartate/ornithine carbamoyltransferase superfamily. ATCase family.</text>
</comment>
<accession>P77918</accession>
<accession>G8ZHD2</accession>
<feature type="chain" id="PRO_0000113253" description="Aspartate carbamoyltransferase catalytic subunit">
    <location>
        <begin position="1"/>
        <end position="308"/>
    </location>
</feature>
<feature type="binding site" evidence="1">
    <location>
        <position position="57"/>
    </location>
    <ligand>
        <name>carbamoyl phosphate</name>
        <dbReference type="ChEBI" id="CHEBI:58228"/>
    </ligand>
</feature>
<feature type="binding site" evidence="1">
    <location>
        <position position="58"/>
    </location>
    <ligand>
        <name>carbamoyl phosphate</name>
        <dbReference type="ChEBI" id="CHEBI:58228"/>
    </ligand>
</feature>
<feature type="binding site" evidence="1">
    <location>
        <position position="86"/>
    </location>
    <ligand>
        <name>L-aspartate</name>
        <dbReference type="ChEBI" id="CHEBI:29991"/>
    </ligand>
</feature>
<feature type="binding site" evidence="1">
    <location>
        <position position="107"/>
    </location>
    <ligand>
        <name>carbamoyl phosphate</name>
        <dbReference type="ChEBI" id="CHEBI:58228"/>
    </ligand>
</feature>
<feature type="binding site" evidence="1">
    <location>
        <position position="135"/>
    </location>
    <ligand>
        <name>carbamoyl phosphate</name>
        <dbReference type="ChEBI" id="CHEBI:58228"/>
    </ligand>
</feature>
<feature type="binding site" evidence="1">
    <location>
        <position position="138"/>
    </location>
    <ligand>
        <name>carbamoyl phosphate</name>
        <dbReference type="ChEBI" id="CHEBI:58228"/>
    </ligand>
</feature>
<feature type="binding site" evidence="1">
    <location>
        <position position="168"/>
    </location>
    <ligand>
        <name>L-aspartate</name>
        <dbReference type="ChEBI" id="CHEBI:29991"/>
    </ligand>
</feature>
<feature type="binding site" evidence="1">
    <location>
        <position position="229"/>
    </location>
    <ligand>
        <name>L-aspartate</name>
        <dbReference type="ChEBI" id="CHEBI:29991"/>
    </ligand>
</feature>
<feature type="binding site" evidence="1">
    <location>
        <position position="268"/>
    </location>
    <ligand>
        <name>carbamoyl phosphate</name>
        <dbReference type="ChEBI" id="CHEBI:58228"/>
    </ligand>
</feature>
<feature type="binding site" evidence="1">
    <location>
        <position position="269"/>
    </location>
    <ligand>
        <name>carbamoyl phosphate</name>
        <dbReference type="ChEBI" id="CHEBI:58228"/>
    </ligand>
</feature>
<feature type="helix" evidence="4">
    <location>
        <begin position="11"/>
        <end position="13"/>
    </location>
</feature>
<feature type="helix" evidence="4">
    <location>
        <begin position="16"/>
        <end position="36"/>
    </location>
</feature>
<feature type="turn" evidence="4">
    <location>
        <begin position="41"/>
        <end position="44"/>
    </location>
</feature>
<feature type="strand" evidence="4">
    <location>
        <begin position="46"/>
        <end position="53"/>
    </location>
</feature>
<feature type="helix" evidence="4">
    <location>
        <begin position="57"/>
        <end position="68"/>
    </location>
</feature>
<feature type="strand" evidence="4">
    <location>
        <begin position="72"/>
        <end position="77"/>
    </location>
</feature>
<feature type="helix" evidence="4">
    <location>
        <begin position="79"/>
        <end position="81"/>
    </location>
</feature>
<feature type="helix" evidence="4">
    <location>
        <begin position="83"/>
        <end position="86"/>
    </location>
</feature>
<feature type="helix" evidence="4">
    <location>
        <begin position="90"/>
        <end position="97"/>
    </location>
</feature>
<feature type="turn" evidence="4">
    <location>
        <begin position="98"/>
        <end position="100"/>
    </location>
</feature>
<feature type="strand" evidence="4">
    <location>
        <begin position="102"/>
        <end position="110"/>
    </location>
</feature>
<feature type="helix" evidence="4">
    <location>
        <begin position="113"/>
        <end position="119"/>
    </location>
</feature>
<feature type="strand" evidence="4">
    <location>
        <begin position="125"/>
        <end position="130"/>
    </location>
</feature>
<feature type="helix" evidence="4">
    <location>
        <begin position="136"/>
        <end position="149"/>
    </location>
</feature>
<feature type="strand" evidence="4">
    <location>
        <begin position="153"/>
        <end position="162"/>
    </location>
</feature>
<feature type="turn" evidence="4">
    <location>
        <begin position="164"/>
        <end position="166"/>
    </location>
</feature>
<feature type="helix" evidence="4">
    <location>
        <begin position="168"/>
        <end position="176"/>
    </location>
</feature>
<feature type="helix" evidence="4">
    <location>
        <begin position="177"/>
        <end position="179"/>
    </location>
</feature>
<feature type="strand" evidence="4">
    <location>
        <begin position="182"/>
        <end position="187"/>
    </location>
</feature>
<feature type="helix" evidence="4">
    <location>
        <begin position="190"/>
        <end position="192"/>
    </location>
</feature>
<feature type="helix" evidence="4">
    <location>
        <begin position="196"/>
        <end position="204"/>
    </location>
</feature>
<feature type="strand" evidence="4">
    <location>
        <begin position="209"/>
        <end position="213"/>
    </location>
</feature>
<feature type="helix" evidence="4">
    <location>
        <begin position="216"/>
        <end position="219"/>
    </location>
</feature>
<feature type="strand" evidence="4">
    <location>
        <begin position="223"/>
        <end position="227"/>
    </location>
</feature>
<feature type="helix" evidence="4">
    <location>
        <begin position="232"/>
        <end position="234"/>
    </location>
</feature>
<feature type="strand" evidence="4">
    <location>
        <begin position="235"/>
        <end position="237"/>
    </location>
</feature>
<feature type="helix" evidence="4">
    <location>
        <begin position="238"/>
        <end position="242"/>
    </location>
</feature>
<feature type="turn" evidence="4">
    <location>
        <begin position="243"/>
        <end position="246"/>
    </location>
</feature>
<feature type="helix" evidence="4">
    <location>
        <begin position="254"/>
        <end position="257"/>
    </location>
</feature>
<feature type="strand" evidence="4">
    <location>
        <begin position="263"/>
        <end position="265"/>
    </location>
</feature>
<feature type="strand" evidence="4">
    <location>
        <begin position="271"/>
        <end position="274"/>
    </location>
</feature>
<feature type="helix" evidence="4">
    <location>
        <begin position="276"/>
        <end position="280"/>
    </location>
</feature>
<feature type="helix" evidence="4">
    <location>
        <begin position="286"/>
        <end position="291"/>
    </location>
</feature>
<feature type="helix" evidence="4">
    <location>
        <begin position="293"/>
        <end position="304"/>
    </location>
</feature>
<evidence type="ECO:0000255" key="1">
    <source>
        <dbReference type="HAMAP-Rule" id="MF_00001"/>
    </source>
</evidence>
<evidence type="ECO:0000269" key="2">
    <source>
    </source>
</evidence>
<evidence type="ECO:0000305" key="3"/>
<evidence type="ECO:0007829" key="4">
    <source>
        <dbReference type="PDB" id="1ML4"/>
    </source>
</evidence>